<comment type="function">
    <text evidence="1">Allows the formation of correctly charged Gln-tRNA(Gln) through the transamidation of misacylated Glu-tRNA(Gln) in organisms which lack glutaminyl-tRNA synthetase. The reaction takes place in the presence of glutamine and ATP through an activated gamma-phospho-Glu-tRNA(Gln).</text>
</comment>
<comment type="catalytic activity">
    <reaction evidence="1">
        <text>L-glutamyl-tRNA(Gln) + L-glutamine + ATP + H2O = L-glutaminyl-tRNA(Gln) + L-glutamate + ADP + phosphate + H(+)</text>
        <dbReference type="Rhea" id="RHEA:17521"/>
        <dbReference type="Rhea" id="RHEA-COMP:9681"/>
        <dbReference type="Rhea" id="RHEA-COMP:9684"/>
        <dbReference type="ChEBI" id="CHEBI:15377"/>
        <dbReference type="ChEBI" id="CHEBI:15378"/>
        <dbReference type="ChEBI" id="CHEBI:29985"/>
        <dbReference type="ChEBI" id="CHEBI:30616"/>
        <dbReference type="ChEBI" id="CHEBI:43474"/>
        <dbReference type="ChEBI" id="CHEBI:58359"/>
        <dbReference type="ChEBI" id="CHEBI:78520"/>
        <dbReference type="ChEBI" id="CHEBI:78521"/>
        <dbReference type="ChEBI" id="CHEBI:456216"/>
        <dbReference type="EC" id="6.3.5.7"/>
    </reaction>
</comment>
<comment type="subunit">
    <text evidence="1">Heterotrimer of A, B and C subunits.</text>
</comment>
<comment type="similarity">
    <text evidence="1">Belongs to the amidase family. GatA subfamily.</text>
</comment>
<organism>
    <name type="scientific">Acinetobacter baumannii (strain AYE)</name>
    <dbReference type="NCBI Taxonomy" id="509173"/>
    <lineage>
        <taxon>Bacteria</taxon>
        <taxon>Pseudomonadati</taxon>
        <taxon>Pseudomonadota</taxon>
        <taxon>Gammaproteobacteria</taxon>
        <taxon>Moraxellales</taxon>
        <taxon>Moraxellaceae</taxon>
        <taxon>Acinetobacter</taxon>
        <taxon>Acinetobacter calcoaceticus/baumannii complex</taxon>
    </lineage>
</organism>
<name>GATA_ACIBY</name>
<gene>
    <name evidence="1" type="primary">gatA</name>
    <name type="ordered locus">ABAYE0698</name>
</gene>
<evidence type="ECO:0000255" key="1">
    <source>
        <dbReference type="HAMAP-Rule" id="MF_00120"/>
    </source>
</evidence>
<reference key="1">
    <citation type="journal article" date="2008" name="PLoS ONE">
        <title>Comparative analysis of Acinetobacters: three genomes for three lifestyles.</title>
        <authorList>
            <person name="Vallenet D."/>
            <person name="Nordmann P."/>
            <person name="Barbe V."/>
            <person name="Poirel L."/>
            <person name="Mangenot S."/>
            <person name="Bataille E."/>
            <person name="Dossat C."/>
            <person name="Gas S."/>
            <person name="Kreimeyer A."/>
            <person name="Lenoble P."/>
            <person name="Oztas S."/>
            <person name="Poulain J."/>
            <person name="Segurens B."/>
            <person name="Robert C."/>
            <person name="Abergel C."/>
            <person name="Claverie J.-M."/>
            <person name="Raoult D."/>
            <person name="Medigue C."/>
            <person name="Weissenbach J."/>
            <person name="Cruveiller S."/>
        </authorList>
    </citation>
    <scope>NUCLEOTIDE SEQUENCE [LARGE SCALE GENOMIC DNA]</scope>
    <source>
        <strain>AYE</strain>
    </source>
</reference>
<sequence>MTDLHRLSIRELAEGLSQAKFSSRELTEHYLKRIAKIDPQVKSYVTVTPEQALREADAADAALKAGNATALTGIPLAHKDIFCTKGIKTTAGSKMLDNFISPYDATVVEKTKAAGLVTLGKVNMDEFAMGSTSESSYVGATSNPWALDHVPGGSSGGSAAAVAADLAPFATGTDTGGSIRQPASFCGLTGLKPTYGRVSRFGIIAYASSLDQAGPMARSAEDCAYLMNVIAGHDAKDSTSVKKEVDDYVANLNNTSVKGLRIGIPKQYFNVAGLDADVKARVEESLKKLEEMGAALVEIDLNMTEAYVPTYYLIAPAEASSNLSRYDGVRYGYRCENPADLMDLYKRSRSEGFGPEVQRRILIGTYALSAGYYDAYYVKAQKVRRLIQQDFLKAFENVDVIAAPAAPTTAYKIGASLDPVEMYLGDIYTIAVNLAGLPAINAPVGFDKDNLPVGLQLIGNYWSESQLLSIVHQYQQNTDWHTKRAAIAEENA</sequence>
<keyword id="KW-0067">ATP-binding</keyword>
<keyword id="KW-0436">Ligase</keyword>
<keyword id="KW-0547">Nucleotide-binding</keyword>
<keyword id="KW-0648">Protein biosynthesis</keyword>
<accession>B0VEN3</accession>
<proteinExistence type="inferred from homology"/>
<feature type="chain" id="PRO_1000095103" description="Glutamyl-tRNA(Gln) amidotransferase subunit A">
    <location>
        <begin position="1"/>
        <end position="492"/>
    </location>
</feature>
<feature type="active site" description="Charge relay system" evidence="1">
    <location>
        <position position="79"/>
    </location>
</feature>
<feature type="active site" description="Charge relay system" evidence="1">
    <location>
        <position position="154"/>
    </location>
</feature>
<feature type="active site" description="Acyl-ester intermediate" evidence="1">
    <location>
        <position position="178"/>
    </location>
</feature>
<protein>
    <recommendedName>
        <fullName evidence="1">Glutamyl-tRNA(Gln) amidotransferase subunit A</fullName>
        <shortName evidence="1">Glu-ADT subunit A</shortName>
        <ecNumber evidence="1">6.3.5.7</ecNumber>
    </recommendedName>
</protein>
<dbReference type="EC" id="6.3.5.7" evidence="1"/>
<dbReference type="EMBL" id="CU459141">
    <property type="protein sequence ID" value="CAM85661.1"/>
    <property type="molecule type" value="Genomic_DNA"/>
</dbReference>
<dbReference type="RefSeq" id="WP_000130658.1">
    <property type="nucleotide sequence ID" value="NZ_JBDGFB010000002.1"/>
</dbReference>
<dbReference type="SMR" id="B0VEN3"/>
<dbReference type="EnsemblBacteria" id="CAM85661">
    <property type="protein sequence ID" value="CAM85661"/>
    <property type="gene ID" value="ABAYE0698"/>
</dbReference>
<dbReference type="KEGG" id="aby:ABAYE0698"/>
<dbReference type="HOGENOM" id="CLU_009600_0_3_6"/>
<dbReference type="GO" id="GO:0030956">
    <property type="term" value="C:glutamyl-tRNA(Gln) amidotransferase complex"/>
    <property type="evidence" value="ECO:0007669"/>
    <property type="project" value="InterPro"/>
</dbReference>
<dbReference type="GO" id="GO:0005524">
    <property type="term" value="F:ATP binding"/>
    <property type="evidence" value="ECO:0007669"/>
    <property type="project" value="UniProtKB-KW"/>
</dbReference>
<dbReference type="GO" id="GO:0050567">
    <property type="term" value="F:glutaminyl-tRNA synthase (glutamine-hydrolyzing) activity"/>
    <property type="evidence" value="ECO:0007669"/>
    <property type="project" value="UniProtKB-UniRule"/>
</dbReference>
<dbReference type="GO" id="GO:0006412">
    <property type="term" value="P:translation"/>
    <property type="evidence" value="ECO:0007669"/>
    <property type="project" value="UniProtKB-UniRule"/>
</dbReference>
<dbReference type="Gene3D" id="3.90.1300.10">
    <property type="entry name" value="Amidase signature (AS) domain"/>
    <property type="match status" value="1"/>
</dbReference>
<dbReference type="HAMAP" id="MF_00120">
    <property type="entry name" value="GatA"/>
    <property type="match status" value="1"/>
</dbReference>
<dbReference type="InterPro" id="IPR000120">
    <property type="entry name" value="Amidase"/>
</dbReference>
<dbReference type="InterPro" id="IPR020556">
    <property type="entry name" value="Amidase_CS"/>
</dbReference>
<dbReference type="InterPro" id="IPR023631">
    <property type="entry name" value="Amidase_dom"/>
</dbReference>
<dbReference type="InterPro" id="IPR036928">
    <property type="entry name" value="AS_sf"/>
</dbReference>
<dbReference type="InterPro" id="IPR004412">
    <property type="entry name" value="GatA"/>
</dbReference>
<dbReference type="NCBIfam" id="TIGR00132">
    <property type="entry name" value="gatA"/>
    <property type="match status" value="1"/>
</dbReference>
<dbReference type="PANTHER" id="PTHR11895:SF151">
    <property type="entry name" value="GLUTAMYL-TRNA(GLN) AMIDOTRANSFERASE SUBUNIT A"/>
    <property type="match status" value="1"/>
</dbReference>
<dbReference type="PANTHER" id="PTHR11895">
    <property type="entry name" value="TRANSAMIDASE"/>
    <property type="match status" value="1"/>
</dbReference>
<dbReference type="Pfam" id="PF01425">
    <property type="entry name" value="Amidase"/>
    <property type="match status" value="1"/>
</dbReference>
<dbReference type="SUPFAM" id="SSF75304">
    <property type="entry name" value="Amidase signature (AS) enzymes"/>
    <property type="match status" value="1"/>
</dbReference>
<dbReference type="PROSITE" id="PS00571">
    <property type="entry name" value="AMIDASES"/>
    <property type="match status" value="1"/>
</dbReference>